<reference key="1">
    <citation type="journal article" date="2001" name="Mol. Biol. Evol.">
        <title>Mechanisms for evolving hypervariability: the case of conopeptides.</title>
        <authorList>
            <person name="Conticello S.G."/>
            <person name="Gilad Y."/>
            <person name="Avidan N."/>
            <person name="Ben-Asher E."/>
            <person name="Levy Z."/>
            <person name="Fainzilber M."/>
        </authorList>
    </citation>
    <scope>NUCLEOTIDE SEQUENCE [MRNA]</scope>
    <source>
        <tissue>Venom duct</tissue>
    </source>
</reference>
<organism>
    <name type="scientific">Conus ventricosus</name>
    <name type="common">Mediterranean cone</name>
    <dbReference type="NCBI Taxonomy" id="117992"/>
    <lineage>
        <taxon>Eukaryota</taxon>
        <taxon>Metazoa</taxon>
        <taxon>Spiralia</taxon>
        <taxon>Lophotrochozoa</taxon>
        <taxon>Mollusca</taxon>
        <taxon>Gastropoda</taxon>
        <taxon>Caenogastropoda</taxon>
        <taxon>Neogastropoda</taxon>
        <taxon>Conoidea</taxon>
        <taxon>Conidae</taxon>
        <taxon>Conus</taxon>
        <taxon>Lautoconus</taxon>
    </lineage>
</organism>
<feature type="signal peptide" evidence="2">
    <location>
        <begin position="1"/>
        <end position="20"/>
    </location>
</feature>
<feature type="propeptide" id="PRO_0000404870" evidence="1">
    <location>
        <begin position="21"/>
        <end position="45"/>
    </location>
</feature>
<feature type="peptide" id="PRO_0000404871" description="Conotoxin VnMSGL-0112">
    <location>
        <begin position="46"/>
        <end position="76"/>
    </location>
</feature>
<feature type="disulfide bond" evidence="1">
    <location>
        <begin position="49"/>
        <end position="61"/>
    </location>
</feature>
<feature type="disulfide bond" evidence="1">
    <location>
        <begin position="53"/>
        <end position="70"/>
    </location>
</feature>
<feature type="disulfide bond" evidence="1">
    <location>
        <begin position="60"/>
        <end position="74"/>
    </location>
</feature>
<name>O36L_CONVE</name>
<comment type="subcellular location">
    <subcellularLocation>
        <location evidence="1">Secreted</location>
    </subcellularLocation>
</comment>
<comment type="tissue specificity">
    <text>Expressed by the venom duct.</text>
</comment>
<comment type="domain">
    <text evidence="1">The presence of a 'disulfide through disulfide knot' structurally defines this protein as a knottin.</text>
</comment>
<comment type="domain">
    <text>The cysteine framework is VI/VII (C-C-CC-C-C).</text>
</comment>
<comment type="similarity">
    <text evidence="3">Belongs to the conotoxin O3 superfamily.</text>
</comment>
<protein>
    <recommendedName>
        <fullName>Conotoxin VnMSGL-0112</fullName>
    </recommendedName>
</protein>
<sequence length="76" mass="8391">MSGLGIMVLTLLLLVSMATSHQDGRGKQATQRDAINVRRRRSITRTEACYEYCKEQNKTCCGISNGRPICVGGCIR</sequence>
<accession>Q9BP60</accession>
<keyword id="KW-1015">Disulfide bond</keyword>
<keyword id="KW-0960">Knottin</keyword>
<keyword id="KW-0528">Neurotoxin</keyword>
<keyword id="KW-0964">Secreted</keyword>
<keyword id="KW-0732">Signal</keyword>
<keyword id="KW-0800">Toxin</keyword>
<evidence type="ECO:0000250" key="1"/>
<evidence type="ECO:0000255" key="2"/>
<evidence type="ECO:0000305" key="3"/>
<proteinExistence type="evidence at transcript level"/>
<dbReference type="EMBL" id="AF215078">
    <property type="protein sequence ID" value="AAG60506.1"/>
    <property type="molecule type" value="mRNA"/>
</dbReference>
<dbReference type="ConoServer" id="765">
    <property type="toxin name" value="Vn6.21 precursor"/>
</dbReference>
<dbReference type="GO" id="GO:0005576">
    <property type="term" value="C:extracellular region"/>
    <property type="evidence" value="ECO:0007669"/>
    <property type="project" value="UniProtKB-SubCell"/>
</dbReference>
<dbReference type="GO" id="GO:0008200">
    <property type="term" value="F:ion channel inhibitor activity"/>
    <property type="evidence" value="ECO:0007669"/>
    <property type="project" value="InterPro"/>
</dbReference>
<dbReference type="GO" id="GO:0090729">
    <property type="term" value="F:toxin activity"/>
    <property type="evidence" value="ECO:0007669"/>
    <property type="project" value="UniProtKB-KW"/>
</dbReference>
<dbReference type="InterPro" id="IPR004214">
    <property type="entry name" value="Conotoxin"/>
</dbReference>
<dbReference type="Pfam" id="PF02950">
    <property type="entry name" value="Conotoxin"/>
    <property type="match status" value="1"/>
</dbReference>